<evidence type="ECO:0000255" key="1"/>
<evidence type="ECO:0000305" key="2"/>
<sequence length="139" mass="15635">MMSYDAETGIAKVKCQSQSTCGACSARETCGTESLSELNGKRGEHIFTLETITPLRTDQMVEIGLEEKSMLFSALLMYIVQLFTLLVATLLSSYISENELIRAILIFMLTALSFVMVKRYTRKLGQQTEFQSVLLRVLF</sequence>
<comment type="subcellular location">
    <subcellularLocation>
        <location evidence="2">Cell inner membrane</location>
        <topology evidence="2">Multi-pass membrane protein</topology>
    </subcellularLocation>
</comment>
<comment type="similarity">
    <text evidence="2">Belongs to the RseC family.</text>
</comment>
<proteinExistence type="inferred from homology"/>
<name>Y589_HAEIN</name>
<accession>P44020</accession>
<dbReference type="EMBL" id="L42023">
    <property type="protein sequence ID" value="AAC22246.1"/>
    <property type="molecule type" value="Genomic_DNA"/>
</dbReference>
<dbReference type="PIR" id="B64010">
    <property type="entry name" value="B64010"/>
</dbReference>
<dbReference type="RefSeq" id="NP_438747.1">
    <property type="nucleotide sequence ID" value="NC_000907.1"/>
</dbReference>
<dbReference type="STRING" id="71421.HI_0589"/>
<dbReference type="EnsemblBacteria" id="AAC22246">
    <property type="protein sequence ID" value="AAC22246"/>
    <property type="gene ID" value="HI_0589"/>
</dbReference>
<dbReference type="KEGG" id="hin:HI_0589"/>
<dbReference type="PATRIC" id="fig|71421.8.peg.611"/>
<dbReference type="eggNOG" id="COG3086">
    <property type="taxonomic scope" value="Bacteria"/>
</dbReference>
<dbReference type="HOGENOM" id="CLU_124911_0_0_6"/>
<dbReference type="OrthoDB" id="9795854at2"/>
<dbReference type="PhylomeDB" id="P44020"/>
<dbReference type="BioCyc" id="HINF71421:G1GJ1-601-MONOMER"/>
<dbReference type="Proteomes" id="UP000000579">
    <property type="component" value="Chromosome"/>
</dbReference>
<dbReference type="GO" id="GO:1990204">
    <property type="term" value="C:oxidoreductase complex"/>
    <property type="evidence" value="ECO:0000318"/>
    <property type="project" value="GO_Central"/>
</dbReference>
<dbReference type="GO" id="GO:0005886">
    <property type="term" value="C:plasma membrane"/>
    <property type="evidence" value="ECO:0000318"/>
    <property type="project" value="GO_Central"/>
</dbReference>
<dbReference type="InterPro" id="IPR026268">
    <property type="entry name" value="RseC"/>
</dbReference>
<dbReference type="InterPro" id="IPR007359">
    <property type="entry name" value="SigmaE_reg_RseC_MucC"/>
</dbReference>
<dbReference type="PANTHER" id="PTHR35867">
    <property type="entry name" value="PROTEIN RSEC"/>
    <property type="match status" value="1"/>
</dbReference>
<dbReference type="PANTHER" id="PTHR35867:SF1">
    <property type="entry name" value="PROTEIN RSEC"/>
    <property type="match status" value="1"/>
</dbReference>
<dbReference type="Pfam" id="PF04246">
    <property type="entry name" value="RseC_MucC"/>
    <property type="match status" value="1"/>
</dbReference>
<dbReference type="PIRSF" id="PIRSF004923">
    <property type="entry name" value="RseC"/>
    <property type="match status" value="1"/>
</dbReference>
<organism>
    <name type="scientific">Haemophilus influenzae (strain ATCC 51907 / DSM 11121 / KW20 / Rd)</name>
    <dbReference type="NCBI Taxonomy" id="71421"/>
    <lineage>
        <taxon>Bacteria</taxon>
        <taxon>Pseudomonadati</taxon>
        <taxon>Pseudomonadota</taxon>
        <taxon>Gammaproteobacteria</taxon>
        <taxon>Pasteurellales</taxon>
        <taxon>Pasteurellaceae</taxon>
        <taxon>Haemophilus</taxon>
    </lineage>
</organism>
<protein>
    <recommendedName>
        <fullName>Uncharacterized protein HI_0589</fullName>
    </recommendedName>
</protein>
<reference key="1">
    <citation type="journal article" date="1995" name="Science">
        <title>Whole-genome random sequencing and assembly of Haemophilus influenzae Rd.</title>
        <authorList>
            <person name="Fleischmann R.D."/>
            <person name="Adams M.D."/>
            <person name="White O."/>
            <person name="Clayton R.A."/>
            <person name="Kirkness E.F."/>
            <person name="Kerlavage A.R."/>
            <person name="Bult C.J."/>
            <person name="Tomb J.-F."/>
            <person name="Dougherty B.A."/>
            <person name="Merrick J.M."/>
            <person name="McKenney K."/>
            <person name="Sutton G.G."/>
            <person name="FitzHugh W."/>
            <person name="Fields C.A."/>
            <person name="Gocayne J.D."/>
            <person name="Scott J.D."/>
            <person name="Shirley R."/>
            <person name="Liu L.-I."/>
            <person name="Glodek A."/>
            <person name="Kelley J.M."/>
            <person name="Weidman J.F."/>
            <person name="Phillips C.A."/>
            <person name="Spriggs T."/>
            <person name="Hedblom E."/>
            <person name="Cotton M.D."/>
            <person name="Utterback T.R."/>
            <person name="Hanna M.C."/>
            <person name="Nguyen D.T."/>
            <person name="Saudek D.M."/>
            <person name="Brandon R.C."/>
            <person name="Fine L.D."/>
            <person name="Fritchman J.L."/>
            <person name="Fuhrmann J.L."/>
            <person name="Geoghagen N.S.M."/>
            <person name="Gnehm C.L."/>
            <person name="McDonald L.A."/>
            <person name="Small K.V."/>
            <person name="Fraser C.M."/>
            <person name="Smith H.O."/>
            <person name="Venter J.C."/>
        </authorList>
    </citation>
    <scope>NUCLEOTIDE SEQUENCE [LARGE SCALE GENOMIC DNA]</scope>
    <source>
        <strain>ATCC 51907 / DSM 11121 / KW20 / Rd</strain>
    </source>
</reference>
<keyword id="KW-0997">Cell inner membrane</keyword>
<keyword id="KW-1003">Cell membrane</keyword>
<keyword id="KW-0472">Membrane</keyword>
<keyword id="KW-1185">Reference proteome</keyword>
<keyword id="KW-0812">Transmembrane</keyword>
<keyword id="KW-1133">Transmembrane helix</keyword>
<feature type="chain" id="PRO_0000077936" description="Uncharacterized protein HI_0589">
    <location>
        <begin position="1"/>
        <end position="139"/>
    </location>
</feature>
<feature type="transmembrane region" description="Helical" evidence="1">
    <location>
        <begin position="71"/>
        <end position="91"/>
    </location>
</feature>
<feature type="transmembrane region" description="Helical" evidence="1">
    <location>
        <begin position="97"/>
        <end position="117"/>
    </location>
</feature>
<gene>
    <name type="ordered locus">HI_0589</name>
</gene>